<name>THI4_DESOH</name>
<organism>
    <name type="scientific">Desulfosudis oleivorans (strain DSM 6200 / JCM 39069 / Hxd3)</name>
    <name type="common">Desulfococcus oleovorans</name>
    <dbReference type="NCBI Taxonomy" id="96561"/>
    <lineage>
        <taxon>Bacteria</taxon>
        <taxon>Pseudomonadati</taxon>
        <taxon>Thermodesulfobacteriota</taxon>
        <taxon>Desulfobacteria</taxon>
        <taxon>Desulfobacterales</taxon>
        <taxon>Desulfosudaceae</taxon>
        <taxon>Desulfosudis</taxon>
    </lineage>
</organism>
<keyword id="KW-0408">Iron</keyword>
<keyword id="KW-0479">Metal-binding</keyword>
<keyword id="KW-0520">NAD</keyword>
<keyword id="KW-1185">Reference proteome</keyword>
<keyword id="KW-0784">Thiamine biosynthesis</keyword>
<keyword id="KW-0808">Transferase</keyword>
<accession>A8ZVP3</accession>
<gene>
    <name evidence="1" type="primary">thi4</name>
    <name type="ordered locus">Dole_2426</name>
</gene>
<reference key="1">
    <citation type="submission" date="2007-10" db="EMBL/GenBank/DDBJ databases">
        <title>Complete sequence of Desulfococcus oleovorans Hxd3.</title>
        <authorList>
            <consortium name="US DOE Joint Genome Institute"/>
            <person name="Copeland A."/>
            <person name="Lucas S."/>
            <person name="Lapidus A."/>
            <person name="Barry K."/>
            <person name="Glavina del Rio T."/>
            <person name="Dalin E."/>
            <person name="Tice H."/>
            <person name="Pitluck S."/>
            <person name="Kiss H."/>
            <person name="Brettin T."/>
            <person name="Bruce D."/>
            <person name="Detter J.C."/>
            <person name="Han C."/>
            <person name="Schmutz J."/>
            <person name="Larimer F."/>
            <person name="Land M."/>
            <person name="Hauser L."/>
            <person name="Kyrpides N."/>
            <person name="Kim E."/>
            <person name="Wawrik B."/>
            <person name="Richardson P."/>
        </authorList>
    </citation>
    <scope>NUCLEOTIDE SEQUENCE [LARGE SCALE GENOMIC DNA]</scope>
    <source>
        <strain>DSM 6200 / JCM 39069 / Hxd3</strain>
    </source>
</reference>
<sequence>MELNEVTISRAIIDRFYEKLIANLEVDVAVVGGGPSGLVAAWRLARAGRKVALFERKLSIGGGMWGGAMLFNEIVVQKSALHVLDAMEIGYRLYAEDYYTADAVEAISTLTSQAAKAGVAIFNCVTVEDVMIRPDRIVGLVLNWSPVEMAGLHVDPLAMRASFVIDATGHATEVVHVVAKKVPGTLRTDSGKIEGEKSMWSDRAESLTLENTREVYPGLYVAGMAGNATFGGPRMGAIFGGMLLSGEKVAAEILERLE</sequence>
<evidence type="ECO:0000255" key="1">
    <source>
        <dbReference type="HAMAP-Rule" id="MF_00304"/>
    </source>
</evidence>
<feature type="chain" id="PRO_1000115608" description="Thiamine thiazole synthase">
    <location>
        <begin position="1"/>
        <end position="258"/>
    </location>
</feature>
<feature type="binding site" description="in other chain" evidence="1">
    <location>
        <position position="36"/>
    </location>
    <ligand>
        <name>NAD(+)</name>
        <dbReference type="ChEBI" id="CHEBI:57540"/>
        <note>ligand shared between two adjacent protomers</note>
    </ligand>
</feature>
<feature type="binding site" description="in other chain" evidence="1">
    <location>
        <begin position="55"/>
        <end position="56"/>
    </location>
    <ligand>
        <name>NAD(+)</name>
        <dbReference type="ChEBI" id="CHEBI:57540"/>
        <note>ligand shared between two adjacent protomers</note>
    </ligand>
</feature>
<feature type="binding site" description="in other chain" evidence="1">
    <location>
        <position position="63"/>
    </location>
    <ligand>
        <name>NAD(+)</name>
        <dbReference type="ChEBI" id="CHEBI:57540"/>
        <note>ligand shared between two adjacent protomers</note>
    </ligand>
</feature>
<feature type="binding site" description="in other chain" evidence="1">
    <location>
        <position position="127"/>
    </location>
    <ligand>
        <name>NAD(+)</name>
        <dbReference type="ChEBI" id="CHEBI:57540"/>
        <note>ligand shared between two adjacent protomers</note>
    </ligand>
</feature>
<feature type="binding site" evidence="1">
    <location>
        <begin position="153"/>
        <end position="155"/>
    </location>
    <ligand>
        <name>NAD(+)</name>
        <dbReference type="ChEBI" id="CHEBI:57540"/>
        <note>ligand shared between two adjacent protomers</note>
    </ligand>
</feature>
<feature type="binding site" evidence="1">
    <location>
        <position position="155"/>
    </location>
    <ligand>
        <name>Fe cation</name>
        <dbReference type="ChEBI" id="CHEBI:24875"/>
        <note>ligand shared between two adjacent protomers</note>
    </ligand>
</feature>
<feature type="binding site" description="in other chain" evidence="1">
    <location>
        <position position="170"/>
    </location>
    <ligand>
        <name>Fe cation</name>
        <dbReference type="ChEBI" id="CHEBI:24875"/>
        <note>ligand shared between two adjacent protomers</note>
    </ligand>
</feature>
<feature type="binding site" description="in other chain" evidence="1">
    <location>
        <position position="224"/>
    </location>
    <ligand>
        <name>NAD(+)</name>
        <dbReference type="ChEBI" id="CHEBI:57540"/>
        <note>ligand shared between two adjacent protomers</note>
    </ligand>
</feature>
<feature type="binding site" evidence="1">
    <location>
        <position position="234"/>
    </location>
    <ligand>
        <name>glycine</name>
        <dbReference type="ChEBI" id="CHEBI:57305"/>
    </ligand>
</feature>
<dbReference type="EC" id="2.4.2.59" evidence="1"/>
<dbReference type="EMBL" id="CP000859">
    <property type="protein sequence ID" value="ABW68230.1"/>
    <property type="molecule type" value="Genomic_DNA"/>
</dbReference>
<dbReference type="RefSeq" id="WP_012175842.1">
    <property type="nucleotide sequence ID" value="NC_009943.1"/>
</dbReference>
<dbReference type="SMR" id="A8ZVP3"/>
<dbReference type="STRING" id="96561.Dole_2426"/>
<dbReference type="KEGG" id="dol:Dole_2426"/>
<dbReference type="eggNOG" id="COG1635">
    <property type="taxonomic scope" value="Bacteria"/>
</dbReference>
<dbReference type="HOGENOM" id="CLU_053727_2_0_7"/>
<dbReference type="OrthoDB" id="9777740at2"/>
<dbReference type="UniPathway" id="UPA00060"/>
<dbReference type="Proteomes" id="UP000008561">
    <property type="component" value="Chromosome"/>
</dbReference>
<dbReference type="GO" id="GO:0005506">
    <property type="term" value="F:iron ion binding"/>
    <property type="evidence" value="ECO:0007669"/>
    <property type="project" value="UniProtKB-UniRule"/>
</dbReference>
<dbReference type="GO" id="GO:0016763">
    <property type="term" value="F:pentosyltransferase activity"/>
    <property type="evidence" value="ECO:0007669"/>
    <property type="project" value="UniProtKB-UniRule"/>
</dbReference>
<dbReference type="GO" id="GO:0009228">
    <property type="term" value="P:thiamine biosynthetic process"/>
    <property type="evidence" value="ECO:0007669"/>
    <property type="project" value="UniProtKB-KW"/>
</dbReference>
<dbReference type="GO" id="GO:0009229">
    <property type="term" value="P:thiamine diphosphate biosynthetic process"/>
    <property type="evidence" value="ECO:0007669"/>
    <property type="project" value="UniProtKB-UniRule"/>
</dbReference>
<dbReference type="GO" id="GO:0052837">
    <property type="term" value="P:thiazole biosynthetic process"/>
    <property type="evidence" value="ECO:0007669"/>
    <property type="project" value="UniProtKB-UniRule"/>
</dbReference>
<dbReference type="Gene3D" id="3.50.50.60">
    <property type="entry name" value="FAD/NAD(P)-binding domain"/>
    <property type="match status" value="1"/>
</dbReference>
<dbReference type="HAMAP" id="MF_00304">
    <property type="entry name" value="Thi4"/>
    <property type="match status" value="1"/>
</dbReference>
<dbReference type="InterPro" id="IPR036188">
    <property type="entry name" value="FAD/NAD-bd_sf"/>
</dbReference>
<dbReference type="InterPro" id="IPR002922">
    <property type="entry name" value="Thi4_fam"/>
</dbReference>
<dbReference type="InterPro" id="IPR022828">
    <property type="entry name" value="Thi4_prok"/>
</dbReference>
<dbReference type="NCBIfam" id="TIGR00292">
    <property type="entry name" value="sulfide-dependent adenosine diphosphate thiazole synthase"/>
    <property type="match status" value="1"/>
</dbReference>
<dbReference type="PANTHER" id="PTHR43422">
    <property type="entry name" value="THIAMINE THIAZOLE SYNTHASE"/>
    <property type="match status" value="1"/>
</dbReference>
<dbReference type="PANTHER" id="PTHR43422:SF3">
    <property type="entry name" value="THIAMINE THIAZOLE SYNTHASE"/>
    <property type="match status" value="1"/>
</dbReference>
<dbReference type="Pfam" id="PF01946">
    <property type="entry name" value="Thi4"/>
    <property type="match status" value="1"/>
</dbReference>
<dbReference type="PRINTS" id="PR00420">
    <property type="entry name" value="RNGMNOXGNASE"/>
</dbReference>
<dbReference type="SUPFAM" id="SSF51905">
    <property type="entry name" value="FAD/NAD(P)-binding domain"/>
    <property type="match status" value="1"/>
</dbReference>
<proteinExistence type="inferred from homology"/>
<protein>
    <recommendedName>
        <fullName evidence="1">Thiamine thiazole synthase</fullName>
        <ecNumber evidence="1">2.4.2.59</ecNumber>
    </recommendedName>
</protein>
<comment type="function">
    <text evidence="1">Involved in the biosynthesis of the thiazole moiety of thiamine. Catalyzes the conversion of NAD and glycine to adenosine diphosphate 5-(2-hydroxyethyl)-4-methylthiazole-2-carboxylate (ADT), an adenylated thiazole intermediate, using free sulfide as a source of sulfur.</text>
</comment>
<comment type="catalytic activity">
    <reaction evidence="1">
        <text>hydrogen sulfide + glycine + NAD(+) = ADP-5-ethyl-4-methylthiazole-2-carboxylate + nicotinamide + 3 H2O + H(+)</text>
        <dbReference type="Rhea" id="RHEA:55704"/>
        <dbReference type="ChEBI" id="CHEBI:15377"/>
        <dbReference type="ChEBI" id="CHEBI:15378"/>
        <dbReference type="ChEBI" id="CHEBI:17154"/>
        <dbReference type="ChEBI" id="CHEBI:29919"/>
        <dbReference type="ChEBI" id="CHEBI:57305"/>
        <dbReference type="ChEBI" id="CHEBI:57540"/>
        <dbReference type="ChEBI" id="CHEBI:139151"/>
        <dbReference type="EC" id="2.4.2.59"/>
    </reaction>
</comment>
<comment type="cofactor">
    <cofactor evidence="1">
        <name>Fe(2+)</name>
        <dbReference type="ChEBI" id="CHEBI:29033"/>
    </cofactor>
</comment>
<comment type="pathway">
    <text evidence="1">Cofactor biosynthesis; thiamine diphosphate biosynthesis.</text>
</comment>
<comment type="subunit">
    <text evidence="1">Homooctamer; tetramer of dimers.</text>
</comment>
<comment type="similarity">
    <text evidence="1">Belongs to the THI4 family.</text>
</comment>